<reference key="1">
    <citation type="journal article" date="2009" name="Science">
        <title>The dynamics and time scale of ongoing genomic erosion in symbiotic bacteria.</title>
        <authorList>
            <person name="Moran N.A."/>
            <person name="McLaughlin H.J."/>
            <person name="Sorek R."/>
        </authorList>
    </citation>
    <scope>NUCLEOTIDE SEQUENCE [LARGE SCALE GENOMIC DNA]</scope>
    <source>
        <strain>Tuc7</strain>
    </source>
</reference>
<organism>
    <name type="scientific">Buchnera aphidicola subsp. Acyrthosiphon pisum (strain Tuc7)</name>
    <dbReference type="NCBI Taxonomy" id="561501"/>
    <lineage>
        <taxon>Bacteria</taxon>
        <taxon>Pseudomonadati</taxon>
        <taxon>Pseudomonadota</taxon>
        <taxon>Gammaproteobacteria</taxon>
        <taxon>Enterobacterales</taxon>
        <taxon>Erwiniaceae</taxon>
        <taxon>Buchnera</taxon>
    </lineage>
</organism>
<proteinExistence type="inferred from homology"/>
<dbReference type="EMBL" id="CP001158">
    <property type="protein sequence ID" value="ACL29839.1"/>
    <property type="molecule type" value="Genomic_DNA"/>
</dbReference>
<dbReference type="RefSeq" id="WP_009873967.1">
    <property type="nucleotide sequence ID" value="NC_011834.1"/>
</dbReference>
<dbReference type="SMR" id="B8D6S4"/>
<dbReference type="KEGG" id="bau:BUAPTUC7_005"/>
<dbReference type="HOGENOM" id="CLU_085114_3_0_6"/>
<dbReference type="GO" id="GO:0005886">
    <property type="term" value="C:plasma membrane"/>
    <property type="evidence" value="ECO:0007669"/>
    <property type="project" value="UniProtKB-SubCell"/>
</dbReference>
<dbReference type="GO" id="GO:0045259">
    <property type="term" value="C:proton-transporting ATP synthase complex"/>
    <property type="evidence" value="ECO:0007669"/>
    <property type="project" value="UniProtKB-KW"/>
</dbReference>
<dbReference type="GO" id="GO:0046933">
    <property type="term" value="F:proton-transporting ATP synthase activity, rotational mechanism"/>
    <property type="evidence" value="ECO:0007669"/>
    <property type="project" value="UniProtKB-UniRule"/>
</dbReference>
<dbReference type="Gene3D" id="1.10.520.20">
    <property type="entry name" value="N-terminal domain of the delta subunit of the F1F0-ATP synthase"/>
    <property type="match status" value="1"/>
</dbReference>
<dbReference type="HAMAP" id="MF_01416">
    <property type="entry name" value="ATP_synth_delta_bact"/>
    <property type="match status" value="1"/>
</dbReference>
<dbReference type="InterPro" id="IPR026015">
    <property type="entry name" value="ATP_synth_OSCP/delta_N_sf"/>
</dbReference>
<dbReference type="InterPro" id="IPR000711">
    <property type="entry name" value="ATPase_OSCP/dsu"/>
</dbReference>
<dbReference type="NCBIfam" id="TIGR01145">
    <property type="entry name" value="ATP_synt_delta"/>
    <property type="match status" value="1"/>
</dbReference>
<dbReference type="NCBIfam" id="NF004402">
    <property type="entry name" value="PRK05758.2-2"/>
    <property type="match status" value="1"/>
</dbReference>
<dbReference type="PANTHER" id="PTHR11910">
    <property type="entry name" value="ATP SYNTHASE DELTA CHAIN"/>
    <property type="match status" value="1"/>
</dbReference>
<dbReference type="Pfam" id="PF00213">
    <property type="entry name" value="OSCP"/>
    <property type="match status" value="1"/>
</dbReference>
<dbReference type="PRINTS" id="PR00125">
    <property type="entry name" value="ATPASEDELTA"/>
</dbReference>
<dbReference type="SUPFAM" id="SSF47928">
    <property type="entry name" value="N-terminal domain of the delta subunit of the F1F0-ATP synthase"/>
    <property type="match status" value="1"/>
</dbReference>
<protein>
    <recommendedName>
        <fullName evidence="1">ATP synthase subunit delta</fullName>
    </recommendedName>
    <alternativeName>
        <fullName evidence="1">ATP synthase F(1) sector subunit delta</fullName>
    </alternativeName>
    <alternativeName>
        <fullName evidence="1">F-type ATPase subunit delta</fullName>
        <shortName evidence="1">F-ATPase subunit delta</shortName>
    </alternativeName>
</protein>
<sequence length="177" mass="20505">MSVADTIARPYAQAIFEIAIENNTIEKWKNILIFIKTIASHKKFKNFLSGSISPKYLSLIFITIGTNIIDENAKNLIKLLSENQRFNILNNIFERFVKLEACYKNIIIVQLKSAFSLKENHINKIRKVLERFFLKKTKIIYKVDPNILNGMIVKVNNTIFDLSAQNHLKQLSDSLNF</sequence>
<feature type="chain" id="PRO_1000184663" description="ATP synthase subunit delta">
    <location>
        <begin position="1"/>
        <end position="177"/>
    </location>
</feature>
<name>ATPD_BUCAT</name>
<accession>B8D6S4</accession>
<evidence type="ECO:0000255" key="1">
    <source>
        <dbReference type="HAMAP-Rule" id="MF_01416"/>
    </source>
</evidence>
<keyword id="KW-0066">ATP synthesis</keyword>
<keyword id="KW-1003">Cell membrane</keyword>
<keyword id="KW-0139">CF(1)</keyword>
<keyword id="KW-0375">Hydrogen ion transport</keyword>
<keyword id="KW-0406">Ion transport</keyword>
<keyword id="KW-0472">Membrane</keyword>
<keyword id="KW-0813">Transport</keyword>
<comment type="function">
    <text evidence="1">F(1)F(0) ATP synthase produces ATP from ADP in the presence of a proton or sodium gradient. F-type ATPases consist of two structural domains, F(1) containing the extramembraneous catalytic core and F(0) containing the membrane proton channel, linked together by a central stalk and a peripheral stalk. During catalysis, ATP synthesis in the catalytic domain of F(1) is coupled via a rotary mechanism of the central stalk subunits to proton translocation.</text>
</comment>
<comment type="function">
    <text evidence="1">This protein is part of the stalk that links CF(0) to CF(1). It either transmits conformational changes from CF(0) to CF(1) or is implicated in proton conduction.</text>
</comment>
<comment type="subunit">
    <text evidence="1">F-type ATPases have 2 components, F(1) - the catalytic core - and F(0) - the membrane proton channel. F(1) has five subunits: alpha(3), beta(3), gamma(1), delta(1), epsilon(1). F(0) has three main subunits: a(1), b(2) and c(10-14). The alpha and beta chains form an alternating ring which encloses part of the gamma chain. F(1) is attached to F(0) by a central stalk formed by the gamma and epsilon chains, while a peripheral stalk is formed by the delta and b chains.</text>
</comment>
<comment type="subcellular location">
    <subcellularLocation>
        <location evidence="1">Cell membrane</location>
        <topology evidence="1">Peripheral membrane protein</topology>
    </subcellularLocation>
</comment>
<comment type="similarity">
    <text evidence="1">Belongs to the ATPase delta chain family.</text>
</comment>
<gene>
    <name evidence="1" type="primary">atpH</name>
    <name type="ordered locus">BUAPTUC7_005</name>
</gene>